<sequence>MLGLKGCLTILIGYVIAVCALFSSRGRNPSLTDWEKLKDQKISNIDNFGLTGQHLLAFFQENLPFLSFSEEKYRHKHVSLYYDVFKEYILRRASSKKCLPVDSAIAKLNKDVNPMPVHSHNDYWRKLPLFEGLAYGASSTEADVWNIDEKILAVGHNEAYLDPVELTLDKLYTGPLLEILDEVNCQDSDSDRKNGVFFNSPETSLFFYIDFKSDDNELTYKLLMEQYFKSLIDSGYLTYYDMKKDEIIWRPVTVILTGNYPTSLDILDNGNDNGYFESSQRFAFLDAPLLSLEPKYSKLSVAATVSFSQLMKHCGSDHWKVSLRGRMDSNEISCAKSIIDGAHALKLKTRIWGAPTWPANLVETISRQIIHDLGSDLLNLDNLFMASSLI</sequence>
<feature type="signal peptide" evidence="1">
    <location>
        <begin position="1"/>
        <end position="26"/>
    </location>
</feature>
<feature type="chain" id="PRO_0000408709" description="Altered inheritance of mitochondria protein 6">
    <location>
        <begin position="27"/>
        <end position="390"/>
    </location>
</feature>
<comment type="similarity">
    <text evidence="2">Belongs to the AIM6 family.</text>
</comment>
<accession>B3LHB3</accession>
<gene>
    <name type="primary">AIM6</name>
    <name type="ORF">SCRG_00724</name>
</gene>
<name>AIM6_YEAS1</name>
<dbReference type="EMBL" id="CH408043">
    <property type="protein sequence ID" value="EDV08492.1"/>
    <property type="molecule type" value="Genomic_DNA"/>
</dbReference>
<dbReference type="HOGENOM" id="CLU_031561_1_1_1"/>
<dbReference type="OrthoDB" id="1971at4893"/>
<dbReference type="Proteomes" id="UP000008335">
    <property type="component" value="Unassembled WGS sequence"/>
</dbReference>
<dbReference type="GO" id="GO:0008081">
    <property type="term" value="F:phosphoric diester hydrolase activity"/>
    <property type="evidence" value="ECO:0007669"/>
    <property type="project" value="InterPro"/>
</dbReference>
<dbReference type="GO" id="GO:0006629">
    <property type="term" value="P:lipid metabolic process"/>
    <property type="evidence" value="ECO:0007669"/>
    <property type="project" value="InterPro"/>
</dbReference>
<dbReference type="CDD" id="cd08577">
    <property type="entry name" value="PI-PLCc_GDPD_SF_unchar3"/>
    <property type="match status" value="1"/>
</dbReference>
<dbReference type="InterPro" id="IPR039559">
    <property type="entry name" value="AIM6_PI-PLC-like_dom"/>
</dbReference>
<dbReference type="InterPro" id="IPR051236">
    <property type="entry name" value="HAT_RTT109-like"/>
</dbReference>
<dbReference type="InterPro" id="IPR017946">
    <property type="entry name" value="PLC-like_Pdiesterase_TIM-brl"/>
</dbReference>
<dbReference type="PANTHER" id="PTHR31571">
    <property type="entry name" value="ALTERED INHERITANCE OF MITOCHONDRIA PROTEIN 6"/>
    <property type="match status" value="1"/>
</dbReference>
<dbReference type="PANTHER" id="PTHR31571:SF1">
    <property type="entry name" value="ALTERED INHERITANCE OF MITOCHONDRIA PROTEIN 6"/>
    <property type="match status" value="1"/>
</dbReference>
<dbReference type="SUPFAM" id="SSF51695">
    <property type="entry name" value="PLC-like phosphodiesterases"/>
    <property type="match status" value="1"/>
</dbReference>
<reference key="1">
    <citation type="submission" date="2005-03" db="EMBL/GenBank/DDBJ databases">
        <title>Annotation of the Saccharomyces cerevisiae RM11-1a genome.</title>
        <authorList>
            <consortium name="The Broad Institute Genome Sequencing Platform"/>
            <person name="Birren B.W."/>
            <person name="Lander E.S."/>
            <person name="Galagan J.E."/>
            <person name="Nusbaum C."/>
            <person name="Devon K."/>
            <person name="Cuomo C."/>
            <person name="Jaffe D.B."/>
            <person name="Butler J."/>
            <person name="Alvarez P."/>
            <person name="Gnerre S."/>
            <person name="Grabherr M."/>
            <person name="Kleber M."/>
            <person name="Mauceli E.W."/>
            <person name="Brockman W."/>
            <person name="MacCallum I.A."/>
            <person name="Rounsley S."/>
            <person name="Young S.K."/>
            <person name="LaButti K."/>
            <person name="Pushparaj V."/>
            <person name="DeCaprio D."/>
            <person name="Crawford M."/>
            <person name="Koehrsen M."/>
            <person name="Engels R."/>
            <person name="Montgomery P."/>
            <person name="Pearson M."/>
            <person name="Howarth C."/>
            <person name="Larson L."/>
            <person name="Luoma S."/>
            <person name="White J."/>
            <person name="O'Leary S."/>
            <person name="Kodira C.D."/>
            <person name="Zeng Q."/>
            <person name="Yandava C."/>
            <person name="Alvarado L."/>
            <person name="Pratt S."/>
            <person name="Kruglyak L."/>
        </authorList>
    </citation>
    <scope>NUCLEOTIDE SEQUENCE [LARGE SCALE GENOMIC DNA]</scope>
    <source>
        <strain>RM11-1a</strain>
    </source>
</reference>
<protein>
    <recommendedName>
        <fullName>Altered inheritance of mitochondria protein 6</fullName>
    </recommendedName>
</protein>
<organism>
    <name type="scientific">Saccharomyces cerevisiae (strain RM11-1a)</name>
    <name type="common">Baker's yeast</name>
    <dbReference type="NCBI Taxonomy" id="285006"/>
    <lineage>
        <taxon>Eukaryota</taxon>
        <taxon>Fungi</taxon>
        <taxon>Dikarya</taxon>
        <taxon>Ascomycota</taxon>
        <taxon>Saccharomycotina</taxon>
        <taxon>Saccharomycetes</taxon>
        <taxon>Saccharomycetales</taxon>
        <taxon>Saccharomycetaceae</taxon>
        <taxon>Saccharomyces</taxon>
    </lineage>
</organism>
<keyword id="KW-0732">Signal</keyword>
<proteinExistence type="inferred from homology"/>
<evidence type="ECO:0000255" key="1"/>
<evidence type="ECO:0000305" key="2"/>